<feature type="signal peptide" evidence="1">
    <location>
        <begin position="1"/>
        <end position="18"/>
    </location>
</feature>
<feature type="chain" id="PRO_5003411514" description="Effector protein PevD1">
    <location>
        <begin position="19"/>
        <end position="155"/>
    </location>
</feature>
<feature type="domain" description="AA1-like" evidence="2">
    <location>
        <begin position="33"/>
        <end position="148"/>
    </location>
</feature>
<feature type="disulfide bond" evidence="2 7 11">
    <location>
        <begin position="70"/>
        <end position="84"/>
    </location>
</feature>
<feature type="disulfide bond" evidence="2 7 11">
    <location>
        <begin position="125"/>
        <end position="135"/>
    </location>
</feature>
<feature type="sequence conflict" description="In Ref. 1; AA sequence." evidence="9" ref="1">
    <original>A</original>
    <variation>Q</variation>
    <location>
        <position position="28"/>
    </location>
</feature>
<feature type="sequence conflict" description="In Ref. 1; AA sequence." evidence="9" ref="1">
    <original>SGD</original>
    <variation>VDAS</variation>
    <location>
        <begin position="61"/>
        <end position="63"/>
    </location>
</feature>
<feature type="strand" evidence="12">
    <location>
        <begin position="33"/>
        <end position="47"/>
    </location>
</feature>
<feature type="strand" evidence="12">
    <location>
        <begin position="53"/>
        <end position="62"/>
    </location>
</feature>
<feature type="strand" evidence="12">
    <location>
        <begin position="65"/>
        <end position="74"/>
    </location>
</feature>
<feature type="turn" evidence="12">
    <location>
        <begin position="76"/>
        <end position="79"/>
    </location>
</feature>
<feature type="strand" evidence="12">
    <location>
        <begin position="87"/>
        <end position="95"/>
    </location>
</feature>
<feature type="strand" evidence="12">
    <location>
        <begin position="97"/>
        <end position="107"/>
    </location>
</feature>
<feature type="strand" evidence="12">
    <location>
        <begin position="110"/>
        <end position="113"/>
    </location>
</feature>
<feature type="strand" evidence="12">
    <location>
        <begin position="115"/>
        <end position="121"/>
    </location>
</feature>
<feature type="strand" evidence="12">
    <location>
        <begin position="123"/>
        <end position="129"/>
    </location>
</feature>
<feature type="strand" evidence="12">
    <location>
        <begin position="132"/>
        <end position="137"/>
    </location>
</feature>
<feature type="strand" evidence="12">
    <location>
        <begin position="141"/>
        <end position="148"/>
    </location>
</feature>
<comment type="function">
    <text evidence="3 5 6">Effector protein (PubMed:21691787, PubMed:24080193, PubMed:24337817). Elicits a hypersensitive response (HR) in tobacco plants (N.tabacum) and cotton (G.hirsutum) (PubMed:21691787, PubMed:24080193, PubMed:24337817). Boosts systemic acquired resistance (SAR) to tobacco mosaic virus (TMV) infection in N.tabacum and to V.dhaliae infection in primed cotton seedlings (PubMed:21691787, PubMed:24080193, PubMed:24337817).</text>
</comment>
<comment type="subunit">
    <text evidence="4 7">Monomer (PubMed:22750869). Interacts with Arabidopsis thaliana NRP (PubMed:28633330).</text>
</comment>
<comment type="subcellular location">
    <subcellularLocation>
        <location evidence="3">Secreted</location>
    </subcellularLocation>
</comment>
<comment type="domain">
    <text evidence="5">The N-terminal region (1-98) is sufficient for induction of SAR of N.tabacum to TMV infection. The C-terminal region (99-155) is sufficient for eliciting HR in N.tabacum.</text>
</comment>
<dbReference type="EMBL" id="HQ540585">
    <property type="protein sequence ID" value="ADW79419.1"/>
    <property type="molecule type" value="mRNA"/>
</dbReference>
<dbReference type="PDB" id="5XMZ">
    <property type="method" value="X-ray"/>
    <property type="resolution" value="1.85 A"/>
    <property type="chains" value="A=1-155"/>
</dbReference>
<dbReference type="PDBsum" id="5XMZ"/>
<dbReference type="SMR" id="G0Y276"/>
<dbReference type="HOGENOM" id="CLU_144932_1_0_1"/>
<dbReference type="OMA" id="GPADEIC"/>
<dbReference type="OrthoDB" id="3928926at2759"/>
<dbReference type="GO" id="GO:0005576">
    <property type="term" value="C:extracellular region"/>
    <property type="evidence" value="ECO:0007669"/>
    <property type="project" value="UniProtKB-SubCell"/>
</dbReference>
<dbReference type="GO" id="GO:0052040">
    <property type="term" value="P:symbiont-mediated perturbation of host programmed cell death"/>
    <property type="evidence" value="ECO:0007669"/>
    <property type="project" value="UniProtKB-KW"/>
</dbReference>
<dbReference type="CDD" id="cd12798">
    <property type="entry name" value="Alt_A1"/>
    <property type="match status" value="1"/>
</dbReference>
<dbReference type="Gene3D" id="2.40.350.20">
    <property type="match status" value="1"/>
</dbReference>
<dbReference type="InterPro" id="IPR032382">
    <property type="entry name" value="AltA1"/>
</dbReference>
<dbReference type="Pfam" id="PF16541">
    <property type="entry name" value="AltA1"/>
    <property type="match status" value="1"/>
</dbReference>
<dbReference type="PROSITE" id="PS51895">
    <property type="entry name" value="AA1"/>
    <property type="match status" value="1"/>
</dbReference>
<gene>
    <name evidence="8" type="primary">PevD1</name>
</gene>
<evidence type="ECO:0000255" key="1"/>
<evidence type="ECO:0000255" key="2">
    <source>
        <dbReference type="PROSITE-ProRule" id="PRU01243"/>
    </source>
</evidence>
<evidence type="ECO:0000269" key="3">
    <source>
    </source>
</evidence>
<evidence type="ECO:0000269" key="4">
    <source>
    </source>
</evidence>
<evidence type="ECO:0000269" key="5">
    <source>
    </source>
</evidence>
<evidence type="ECO:0000269" key="6">
    <source>
    </source>
</evidence>
<evidence type="ECO:0000269" key="7">
    <source>
    </source>
</evidence>
<evidence type="ECO:0000303" key="8">
    <source>
    </source>
</evidence>
<evidence type="ECO:0000305" key="9"/>
<evidence type="ECO:0000312" key="10">
    <source>
        <dbReference type="EMBL" id="ADW79419.1"/>
    </source>
</evidence>
<evidence type="ECO:0007744" key="11">
    <source>
        <dbReference type="PDB" id="5XMZ"/>
    </source>
</evidence>
<evidence type="ECO:0007829" key="12">
    <source>
        <dbReference type="PDB" id="5XMZ"/>
    </source>
</evidence>
<sequence length="155" mass="16230">MQFTLAAAAALFGASALAAPASPGSTGAPPDPNMYENIDIADFNVRKGEDGTIKYVNFKLSGDDADGLLCEAQNPGLPSNVITCGESKYRFALSSGKQYEFALSLYHELGLAVGFYGTGEIFTHCRAGGLGDFICQQQNPTTIVIDSLPDAPAEA</sequence>
<protein>
    <recommendedName>
        <fullName evidence="9">Effector protein PevD1</fullName>
    </recommendedName>
    <alternativeName>
        <fullName evidence="8">Hypersensitive response-inducing protein PevD1</fullName>
    </alternativeName>
</protein>
<proteinExistence type="evidence at protein level"/>
<keyword id="KW-0002">3D-structure</keyword>
<keyword id="KW-0903">Direct protein sequencing</keyword>
<keyword id="KW-1015">Disulfide bond</keyword>
<keyword id="KW-0928">Hypersensitive response elicitation</keyword>
<keyword id="KW-0964">Secreted</keyword>
<keyword id="KW-0732">Signal</keyword>
<accession>G0Y276</accession>
<accession>P86840</accession>
<organism evidence="10">
    <name type="scientific">Verticillium dahliae</name>
    <name type="common">Verticillium wilt</name>
    <dbReference type="NCBI Taxonomy" id="27337"/>
    <lineage>
        <taxon>Eukaryota</taxon>
        <taxon>Fungi</taxon>
        <taxon>Dikarya</taxon>
        <taxon>Ascomycota</taxon>
        <taxon>Pezizomycotina</taxon>
        <taxon>Sordariomycetes</taxon>
        <taxon>Hypocreomycetidae</taxon>
        <taxon>Glomerellales</taxon>
        <taxon>Plectosphaerellaceae</taxon>
        <taxon>Verticillium</taxon>
    </lineage>
</organism>
<reference key="1">
    <citation type="journal article" date="2012" name="Appl. Microbiol. Biotechnol.">
        <title>The purification and characterization of a novel hypersensitive-like response-inducing elicitor from Verticillium dahliae that induces resistance responses in tobacco.</title>
        <authorList>
            <person name="Wang B."/>
            <person name="Yang X."/>
            <person name="Zeng H."/>
            <person name="Liu H."/>
            <person name="Zhou T."/>
            <person name="Tan B."/>
            <person name="Yuan J."/>
            <person name="Guo L."/>
            <person name="Qiu D."/>
        </authorList>
    </citation>
    <scope>NUCLEOTIDE SEQUENCE [MRNA]</scope>
    <scope>PROTEIN SEQUENCE OF 28-88</scope>
    <scope>FUNCTION</scope>
    <scope>SUBCELLULAR LOCATION</scope>
</reference>
<reference key="2">
    <citation type="journal article" date="2014" name="Microbiol. Res.">
        <title>Mutational analysis of the Verticillium dahliae protein elicitor PevD1 identifies distinctive regions responsible for hypersensitive response and systemic acquired resistance in tobacco.</title>
        <authorList>
            <person name="Liu W."/>
            <person name="Zeng H."/>
            <person name="Liu Z."/>
            <person name="Yang X."/>
            <person name="Guo L."/>
            <person name="Qiu D."/>
        </authorList>
    </citation>
    <scope>FUNCTION</scope>
    <scope>DOMAIN</scope>
</reference>
<reference key="3">
    <citation type="journal article" date="2014" name="Plant Cell Rep.">
        <title>A fungal protein elicitor PevD1 induces Verticillium wilt resistance in cotton.</title>
        <authorList>
            <person name="Bu B."/>
            <person name="Qiu D."/>
            <person name="Zeng H."/>
            <person name="Guo L."/>
            <person name="Yuan J."/>
            <person name="Yang X."/>
        </authorList>
    </citation>
    <scope>FUNCTION</scope>
</reference>
<reference key="4">
    <citation type="journal article" date="2012" name="Acta Crystallogr. F">
        <title>Purification, crystallization and preliminary X-ray diffraction analysis of the effector protein PevD1 from Verticillium dahliae.</title>
        <authorList>
            <person name="Han L."/>
            <person name="Liu Z."/>
            <person name="Liu X."/>
            <person name="Qiu D."/>
        </authorList>
    </citation>
    <scope>CRYSTALLIZATION</scope>
    <scope>PRELIMINARY X-RAY CRYSTALLOGRAPHY (1.9 ANGSTROMS)</scope>
    <scope>SUBUNIT</scope>
</reference>
<reference key="5">
    <citation type="journal article" date="2017" name="J. Exp. Bot.">
        <title>The asparagine-rich protein NRP interacts with the Verticillium effector PevD1 and regulates the subcellular localization of cryptochrome 2.</title>
        <authorList>
            <person name="Zhou R."/>
            <person name="Zhu T."/>
            <person name="Han L."/>
            <person name="Liu M."/>
            <person name="Xu M."/>
            <person name="Liu Y."/>
            <person name="Han D."/>
            <person name="Qiu D."/>
            <person name="Gong Q."/>
            <person name="Liu X."/>
        </authorList>
    </citation>
    <scope>X-RAY CRYSTALLOGRAPHY (1.85 ANGSTROMS)</scope>
    <scope>DISULFIDE BONDS</scope>
    <scope>INTERACTION WITH ARABIDOPSIS THALIANA NRP</scope>
</reference>
<name>PEVD1_VERDA</name>